<gene>
    <name evidence="2" type="primary">deoD</name>
    <name type="ordered locus">YE0574</name>
</gene>
<comment type="function">
    <text evidence="2">Catalyzes the reversible phosphorolytic breakdown of the N-glycosidic bond in the beta-(deoxy)ribonucleoside molecules, with the formation of the corresponding free purine bases and pentose-1-phosphate.</text>
</comment>
<comment type="catalytic activity">
    <reaction evidence="2">
        <text>a purine D-ribonucleoside + phosphate = a purine nucleobase + alpha-D-ribose 1-phosphate</text>
        <dbReference type="Rhea" id="RHEA:19805"/>
        <dbReference type="ChEBI" id="CHEBI:26386"/>
        <dbReference type="ChEBI" id="CHEBI:43474"/>
        <dbReference type="ChEBI" id="CHEBI:57720"/>
        <dbReference type="ChEBI" id="CHEBI:142355"/>
        <dbReference type="EC" id="2.4.2.1"/>
    </reaction>
</comment>
<comment type="catalytic activity">
    <reaction evidence="2">
        <text>a purine 2'-deoxy-D-ribonucleoside + phosphate = a purine nucleobase + 2-deoxy-alpha-D-ribose 1-phosphate</text>
        <dbReference type="Rhea" id="RHEA:36431"/>
        <dbReference type="ChEBI" id="CHEBI:26386"/>
        <dbReference type="ChEBI" id="CHEBI:43474"/>
        <dbReference type="ChEBI" id="CHEBI:57259"/>
        <dbReference type="ChEBI" id="CHEBI:142361"/>
        <dbReference type="EC" id="2.4.2.1"/>
    </reaction>
</comment>
<comment type="subunit">
    <text evidence="2">Homohexamer; trimer of homodimers.</text>
</comment>
<comment type="similarity">
    <text evidence="2">Belongs to the PNP/UDP phosphorylase family.</text>
</comment>
<reference key="1">
    <citation type="journal article" date="2006" name="PLoS Genet.">
        <title>The complete genome sequence and comparative genome analysis of the high pathogenicity Yersinia enterocolitica strain 8081.</title>
        <authorList>
            <person name="Thomson N.R."/>
            <person name="Howard S."/>
            <person name="Wren B.W."/>
            <person name="Holden M.T.G."/>
            <person name="Crossman L."/>
            <person name="Challis G.L."/>
            <person name="Churcher C."/>
            <person name="Mungall K."/>
            <person name="Brooks K."/>
            <person name="Chillingworth T."/>
            <person name="Feltwell T."/>
            <person name="Abdellah Z."/>
            <person name="Hauser H."/>
            <person name="Jagels K."/>
            <person name="Maddison M."/>
            <person name="Moule S."/>
            <person name="Sanders M."/>
            <person name="Whitehead S."/>
            <person name="Quail M.A."/>
            <person name="Dougan G."/>
            <person name="Parkhill J."/>
            <person name="Prentice M.B."/>
        </authorList>
    </citation>
    <scope>NUCLEOTIDE SEQUENCE [LARGE SCALE GENOMIC DNA]</scope>
    <source>
        <strain>NCTC 13174 / 8081</strain>
    </source>
</reference>
<proteinExistence type="inferred from homology"/>
<accession>A1JJA0</accession>
<protein>
    <recommendedName>
        <fullName evidence="2">Purine nucleoside phosphorylase DeoD-type</fullName>
        <shortName evidence="2">PNP</shortName>
        <ecNumber evidence="2">2.4.2.1</ecNumber>
    </recommendedName>
</protein>
<evidence type="ECO:0000250" key="1">
    <source>
        <dbReference type="UniProtKB" id="P50389"/>
    </source>
</evidence>
<evidence type="ECO:0000255" key="2">
    <source>
        <dbReference type="HAMAP-Rule" id="MF_01627"/>
    </source>
</evidence>
<sequence length="241" mass="26158">MATPHINAEMGDFADVVLMPGDPLRAKHIAETFLKDVKQVNDVRGMLGFTGTYKGRKISVMGHGMGIPSCSIYAKELITDFGVKKIIRVGSCGAVREDVKLRDVVIGMGACTDSKVNRLRFKDHDYAAIADFDMTRNAVDAAKAKGLNVRVGNLFSADLFYTPDPQMFDVMKKYGILGVEMEAAGIYGVAAEFGAKALTICTVSDHIVSGEQTTAAERQTTFNDMIEIALESVLLGDKESY</sequence>
<feature type="chain" id="PRO_1000069649" description="Purine nucleoside phosphorylase DeoD-type">
    <location>
        <begin position="1"/>
        <end position="241"/>
    </location>
</feature>
<feature type="active site" description="Proton donor" evidence="2">
    <location>
        <position position="205"/>
    </location>
</feature>
<feature type="binding site" evidence="1">
    <location>
        <position position="5"/>
    </location>
    <ligand>
        <name>a purine D-ribonucleoside</name>
        <dbReference type="ChEBI" id="CHEBI:142355"/>
        <note>ligand shared between dimeric partners</note>
    </ligand>
</feature>
<feature type="binding site" description="in other chain" evidence="1">
    <location>
        <position position="21"/>
    </location>
    <ligand>
        <name>phosphate</name>
        <dbReference type="ChEBI" id="CHEBI:43474"/>
        <note>ligand shared between dimeric partners</note>
    </ligand>
</feature>
<feature type="binding site" description="in other chain" evidence="1">
    <location>
        <position position="25"/>
    </location>
    <ligand>
        <name>phosphate</name>
        <dbReference type="ChEBI" id="CHEBI:43474"/>
        <note>ligand shared between dimeric partners</note>
    </ligand>
</feature>
<feature type="binding site" evidence="1">
    <location>
        <position position="44"/>
    </location>
    <ligand>
        <name>phosphate</name>
        <dbReference type="ChEBI" id="CHEBI:43474"/>
        <note>ligand shared between dimeric partners</note>
    </ligand>
</feature>
<feature type="binding site" description="in other chain" evidence="1">
    <location>
        <begin position="88"/>
        <end position="91"/>
    </location>
    <ligand>
        <name>phosphate</name>
        <dbReference type="ChEBI" id="CHEBI:43474"/>
        <note>ligand shared between dimeric partners</note>
    </ligand>
</feature>
<feature type="binding site" description="in other chain" evidence="1">
    <location>
        <begin position="180"/>
        <end position="182"/>
    </location>
    <ligand>
        <name>a purine D-ribonucleoside</name>
        <dbReference type="ChEBI" id="CHEBI:142355"/>
        <note>ligand shared between dimeric partners</note>
    </ligand>
</feature>
<feature type="binding site" description="in other chain" evidence="1">
    <location>
        <begin position="204"/>
        <end position="205"/>
    </location>
    <ligand>
        <name>a purine D-ribonucleoside</name>
        <dbReference type="ChEBI" id="CHEBI:142355"/>
        <note>ligand shared between dimeric partners</note>
    </ligand>
</feature>
<feature type="site" description="Important for catalytic activity" evidence="2">
    <location>
        <position position="218"/>
    </location>
</feature>
<keyword id="KW-0328">Glycosyltransferase</keyword>
<keyword id="KW-0808">Transferase</keyword>
<organism>
    <name type="scientific">Yersinia enterocolitica serotype O:8 / biotype 1B (strain NCTC 13174 / 8081)</name>
    <dbReference type="NCBI Taxonomy" id="393305"/>
    <lineage>
        <taxon>Bacteria</taxon>
        <taxon>Pseudomonadati</taxon>
        <taxon>Pseudomonadota</taxon>
        <taxon>Gammaproteobacteria</taxon>
        <taxon>Enterobacterales</taxon>
        <taxon>Yersiniaceae</taxon>
        <taxon>Yersinia</taxon>
    </lineage>
</organism>
<name>DEOD_YERE8</name>
<dbReference type="EC" id="2.4.2.1" evidence="2"/>
<dbReference type="EMBL" id="AM286415">
    <property type="protein sequence ID" value="CAL10690.1"/>
    <property type="molecule type" value="Genomic_DNA"/>
</dbReference>
<dbReference type="RefSeq" id="WP_005166923.1">
    <property type="nucleotide sequence ID" value="NC_008800.1"/>
</dbReference>
<dbReference type="RefSeq" id="YP_001004931.1">
    <property type="nucleotide sequence ID" value="NC_008800.1"/>
</dbReference>
<dbReference type="SMR" id="A1JJA0"/>
<dbReference type="KEGG" id="yen:YE0574"/>
<dbReference type="PATRIC" id="fig|393305.7.peg.666"/>
<dbReference type="eggNOG" id="COG0813">
    <property type="taxonomic scope" value="Bacteria"/>
</dbReference>
<dbReference type="HOGENOM" id="CLU_068457_2_0_6"/>
<dbReference type="OrthoDB" id="9782889at2"/>
<dbReference type="Proteomes" id="UP000000642">
    <property type="component" value="Chromosome"/>
</dbReference>
<dbReference type="GO" id="GO:0005829">
    <property type="term" value="C:cytosol"/>
    <property type="evidence" value="ECO:0007669"/>
    <property type="project" value="TreeGrafter"/>
</dbReference>
<dbReference type="GO" id="GO:0004731">
    <property type="term" value="F:purine-nucleoside phosphorylase activity"/>
    <property type="evidence" value="ECO:0007669"/>
    <property type="project" value="UniProtKB-UniRule"/>
</dbReference>
<dbReference type="GO" id="GO:0006152">
    <property type="term" value="P:purine nucleoside catabolic process"/>
    <property type="evidence" value="ECO:0007669"/>
    <property type="project" value="TreeGrafter"/>
</dbReference>
<dbReference type="CDD" id="cd09006">
    <property type="entry name" value="PNP_EcPNPI-like"/>
    <property type="match status" value="1"/>
</dbReference>
<dbReference type="FunFam" id="3.40.50.1580:FF:000002">
    <property type="entry name" value="Purine nucleoside phosphorylase DeoD-type"/>
    <property type="match status" value="1"/>
</dbReference>
<dbReference type="Gene3D" id="3.40.50.1580">
    <property type="entry name" value="Nucleoside phosphorylase domain"/>
    <property type="match status" value="1"/>
</dbReference>
<dbReference type="HAMAP" id="MF_01627">
    <property type="entry name" value="Pur_nucleosid_phosp"/>
    <property type="match status" value="1"/>
</dbReference>
<dbReference type="InterPro" id="IPR004402">
    <property type="entry name" value="DeoD-type"/>
</dbReference>
<dbReference type="InterPro" id="IPR018016">
    <property type="entry name" value="Nucleoside_phosphorylase_CS"/>
</dbReference>
<dbReference type="InterPro" id="IPR000845">
    <property type="entry name" value="Nucleoside_phosphorylase_d"/>
</dbReference>
<dbReference type="InterPro" id="IPR035994">
    <property type="entry name" value="Nucleoside_phosphorylase_sf"/>
</dbReference>
<dbReference type="NCBIfam" id="TIGR00107">
    <property type="entry name" value="deoD"/>
    <property type="match status" value="1"/>
</dbReference>
<dbReference type="NCBIfam" id="NF004489">
    <property type="entry name" value="PRK05819.1"/>
    <property type="match status" value="1"/>
</dbReference>
<dbReference type="NCBIfam" id="NF009914">
    <property type="entry name" value="PRK13374.1"/>
    <property type="match status" value="1"/>
</dbReference>
<dbReference type="PANTHER" id="PTHR43691:SF2">
    <property type="entry name" value="PURINE NUCLEOSIDE PHOSPHORYLASE DEOD-TYPE"/>
    <property type="match status" value="1"/>
</dbReference>
<dbReference type="PANTHER" id="PTHR43691">
    <property type="entry name" value="URIDINE PHOSPHORYLASE"/>
    <property type="match status" value="1"/>
</dbReference>
<dbReference type="Pfam" id="PF01048">
    <property type="entry name" value="PNP_UDP_1"/>
    <property type="match status" value="1"/>
</dbReference>
<dbReference type="SUPFAM" id="SSF53167">
    <property type="entry name" value="Purine and uridine phosphorylases"/>
    <property type="match status" value="1"/>
</dbReference>
<dbReference type="PROSITE" id="PS01232">
    <property type="entry name" value="PNP_UDP_1"/>
    <property type="match status" value="1"/>
</dbReference>